<comment type="function">
    <text evidence="1">May act as a substrate-specific adapter of an E3 ubiquitin-protein ligase complex (CUL3-RBX1-BTB) which mediates the ubiquitination and subsequent proteasomal degradation of target proteins.</text>
</comment>
<comment type="pathway">
    <text>Protein modification; protein ubiquitination.</text>
</comment>
<comment type="alternative products">
    <event type="alternative splicing"/>
    <isoform>
        <id>O82253-1</id>
        <name>1</name>
        <sequence type="displayed"/>
    </isoform>
    <text>A number of isoforms are produced. According to EST sequences.</text>
</comment>
<comment type="domain">
    <text evidence="5">The BTB/POZ domain mediates the interaction with some component of ubiquitin ligase complexes.</text>
</comment>
<comment type="similarity">
    <text evidence="3">Belongs to the NPH3 family.</text>
</comment>
<sequence length="635" mass="70998">MGVVTVPESNKQSVAAKRAFRPSSSIRHTPQWPVSDVTSDLTIEVGSATFSLHKFPLVSRSGRIRKLVLESKDTNLNLAAVPGGSESFELAAKFCYGVGVQYNSSNIAALRCVAHYLEMTEDLSEKNLEARTEAYLKDSIFNDISNSITVLHSCERLLPVAEEINLVGRLVNAIAVNACKEQLASGLLKLDQSFSCGVPETAKPCDWWGRSLPILKLDFFQRVLSAMKSKGLNHDIISDILMSYARKSLQIIREPNLVKSDSDLQRKQRIVLEAVVGLLPTQANKSSIPISFLSSLLKTAIGSGTSVSCRSDLERRISHLLDQAILEDILIPANIGAMYDTDSVQRIFSMFLNLDECEYRDDDDDEEDAVDESEMAMYDFEGAESPKQSSIFKVSKLMDSYLAEVALDSSLPPSKFIALAELLPDHARVVCDGLYRAVDIFLKVHPHMKDSERYRLCKTVSCKKLSQDASSHAAQNERLPVQIAVQVLFYEQTRLKNAMTSGGGTGGSNQSQFFLFPNRSGSGMASGAISPRDNYASVRRENRELRLEVARMRMRLTDLEKDHVSMKRDFVKPQSRRRRYGMLRKLSRGLNKLNAIVLRFRSSQSVASSGKKHTEEKTNSERRFMFQKRRCHSVS</sequence>
<reference key="1">
    <citation type="journal article" date="1999" name="Nature">
        <title>Sequence and analysis of chromosome 2 of the plant Arabidopsis thaliana.</title>
        <authorList>
            <person name="Lin X."/>
            <person name="Kaul S."/>
            <person name="Rounsley S.D."/>
            <person name="Shea T.P."/>
            <person name="Benito M.-I."/>
            <person name="Town C.D."/>
            <person name="Fujii C.Y."/>
            <person name="Mason T.M."/>
            <person name="Bowman C.L."/>
            <person name="Barnstead M.E."/>
            <person name="Feldblyum T.V."/>
            <person name="Buell C.R."/>
            <person name="Ketchum K.A."/>
            <person name="Lee J.J."/>
            <person name="Ronning C.M."/>
            <person name="Koo H.L."/>
            <person name="Moffat K.S."/>
            <person name="Cronin L.A."/>
            <person name="Shen M."/>
            <person name="Pai G."/>
            <person name="Van Aken S."/>
            <person name="Umayam L."/>
            <person name="Tallon L.J."/>
            <person name="Gill J.E."/>
            <person name="Adams M.D."/>
            <person name="Carrera A.J."/>
            <person name="Creasy T.H."/>
            <person name="Goodman H.M."/>
            <person name="Somerville C.R."/>
            <person name="Copenhaver G.P."/>
            <person name="Preuss D."/>
            <person name="Nierman W.C."/>
            <person name="White O."/>
            <person name="Eisen J.A."/>
            <person name="Salzberg S.L."/>
            <person name="Fraser C.M."/>
            <person name="Venter J.C."/>
        </authorList>
    </citation>
    <scope>NUCLEOTIDE SEQUENCE [LARGE SCALE GENOMIC DNA]</scope>
    <source>
        <strain>cv. Columbia</strain>
    </source>
</reference>
<reference key="2">
    <citation type="journal article" date="2017" name="Plant J.">
        <title>Araport11: a complete reannotation of the Arabidopsis thaliana reference genome.</title>
        <authorList>
            <person name="Cheng C.Y."/>
            <person name="Krishnakumar V."/>
            <person name="Chan A.P."/>
            <person name="Thibaud-Nissen F."/>
            <person name="Schobel S."/>
            <person name="Town C.D."/>
        </authorList>
    </citation>
    <scope>GENOME REANNOTATION</scope>
    <source>
        <strain>cv. Columbia</strain>
    </source>
</reference>
<reference key="3">
    <citation type="journal article" date="2005" name="J. Biol. Chem.">
        <title>Cullins 3a and 3b assemble with members of the broad complex/tramtrack/bric-a-brac (BTB) protein family to form essential ubiquitin-protein ligases (E3s) in Arabidopsis.</title>
        <authorList>
            <person name="Gingerich D.J."/>
            <person name="Gagne J.M."/>
            <person name="Salter D.W."/>
            <person name="Hellmann H."/>
            <person name="Estelle M."/>
            <person name="Ma L."/>
            <person name="Vierstra R.D."/>
        </authorList>
    </citation>
    <scope>DOMAIN BTB</scope>
</reference>
<feature type="chain" id="PRO_0000409568" description="BTB/POZ domain-containing protein SETH6">
    <location>
        <begin position="1"/>
        <end position="635"/>
    </location>
</feature>
<feature type="domain" description="BTB">
    <location>
        <begin position="39"/>
        <end position="104"/>
    </location>
</feature>
<feature type="domain" description="NPH3" evidence="3">
    <location>
        <begin position="206"/>
        <end position="494"/>
    </location>
</feature>
<feature type="region of interest" description="Disordered" evidence="4">
    <location>
        <begin position="604"/>
        <end position="635"/>
    </location>
</feature>
<feature type="compositionally biased region" description="Basic and acidic residues" evidence="4">
    <location>
        <begin position="612"/>
        <end position="624"/>
    </location>
</feature>
<feature type="compositionally biased region" description="Basic residues" evidence="4">
    <location>
        <begin position="625"/>
        <end position="635"/>
    </location>
</feature>
<feature type="modified residue" description="Phosphotyrosine" evidence="2">
    <location>
        <position position="435"/>
    </location>
</feature>
<name>SETH6_ARATH</name>
<proteinExistence type="inferred from homology"/>
<gene>
    <name type="primary">SETH6</name>
    <name type="ordered locus">At2g47860</name>
    <name type="ORF">F17A22.25</name>
</gene>
<keyword id="KW-0025">Alternative splicing</keyword>
<keyword id="KW-0597">Phosphoprotein</keyword>
<keyword id="KW-1185">Reference proteome</keyword>
<keyword id="KW-0833">Ubl conjugation pathway</keyword>
<accession>O82253</accession>
<dbReference type="EMBL" id="AC005309">
    <property type="protein sequence ID" value="AAC63640.1"/>
    <property type="molecule type" value="Genomic_DNA"/>
</dbReference>
<dbReference type="EMBL" id="AC006072">
    <property type="protein sequence ID" value="AAM15126.1"/>
    <property type="molecule type" value="Genomic_DNA"/>
</dbReference>
<dbReference type="EMBL" id="CP002685">
    <property type="protein sequence ID" value="AEC10900.1"/>
    <property type="molecule type" value="Genomic_DNA"/>
</dbReference>
<dbReference type="PIR" id="D84920">
    <property type="entry name" value="D84920"/>
</dbReference>
<dbReference type="RefSeq" id="NP_182307.1">
    <molecule id="O82253-1"/>
    <property type="nucleotide sequence ID" value="NM_130353.3"/>
</dbReference>
<dbReference type="SMR" id="O82253"/>
<dbReference type="FunCoup" id="O82253">
    <property type="interactions" value="1"/>
</dbReference>
<dbReference type="STRING" id="3702.O82253"/>
<dbReference type="iPTMnet" id="O82253"/>
<dbReference type="PaxDb" id="3702-AT2G47860.3"/>
<dbReference type="ProteomicsDB" id="234518">
    <molecule id="O82253-1"/>
</dbReference>
<dbReference type="EnsemblPlants" id="AT2G47860.1">
    <molecule id="O82253-1"/>
    <property type="protein sequence ID" value="AT2G47860.1"/>
    <property type="gene ID" value="AT2G47860"/>
</dbReference>
<dbReference type="GeneID" id="819398"/>
<dbReference type="Gramene" id="AT2G47860.1">
    <molecule id="O82253-1"/>
    <property type="protein sequence ID" value="AT2G47860.1"/>
    <property type="gene ID" value="AT2G47860"/>
</dbReference>
<dbReference type="KEGG" id="ath:AT2G47860"/>
<dbReference type="Araport" id="AT2G47860"/>
<dbReference type="TAIR" id="AT2G47860">
    <property type="gene designation" value="SETH6"/>
</dbReference>
<dbReference type="eggNOG" id="ENOG502QSDZ">
    <property type="taxonomic scope" value="Eukaryota"/>
</dbReference>
<dbReference type="HOGENOM" id="CLU_005994_6_0_1"/>
<dbReference type="InParanoid" id="O82253"/>
<dbReference type="OMA" id="PMAEEIS"/>
<dbReference type="PhylomeDB" id="O82253"/>
<dbReference type="UniPathway" id="UPA00143"/>
<dbReference type="PRO" id="PR:O82253"/>
<dbReference type="Proteomes" id="UP000006548">
    <property type="component" value="Chromosome 2"/>
</dbReference>
<dbReference type="ExpressionAtlas" id="O82253">
    <property type="expression patterns" value="baseline and differential"/>
</dbReference>
<dbReference type="GO" id="GO:0016567">
    <property type="term" value="P:protein ubiquitination"/>
    <property type="evidence" value="ECO:0007669"/>
    <property type="project" value="UniProtKB-UniPathway"/>
</dbReference>
<dbReference type="Gene3D" id="3.30.710.10">
    <property type="entry name" value="Potassium Channel Kv1.1, Chain A"/>
    <property type="match status" value="1"/>
</dbReference>
<dbReference type="InterPro" id="IPR000210">
    <property type="entry name" value="BTB/POZ_dom"/>
</dbReference>
<dbReference type="InterPro" id="IPR043454">
    <property type="entry name" value="NPH3/RPT2-like"/>
</dbReference>
<dbReference type="InterPro" id="IPR027356">
    <property type="entry name" value="NPH3_dom"/>
</dbReference>
<dbReference type="InterPro" id="IPR011333">
    <property type="entry name" value="SKP1/BTB/POZ_sf"/>
</dbReference>
<dbReference type="PANTHER" id="PTHR32370">
    <property type="entry name" value="OS12G0117600 PROTEIN"/>
    <property type="match status" value="1"/>
</dbReference>
<dbReference type="Pfam" id="PF00651">
    <property type="entry name" value="BTB"/>
    <property type="match status" value="1"/>
</dbReference>
<dbReference type="Pfam" id="PF03000">
    <property type="entry name" value="NPH3"/>
    <property type="match status" value="1"/>
</dbReference>
<dbReference type="SUPFAM" id="SSF54695">
    <property type="entry name" value="POZ domain"/>
    <property type="match status" value="1"/>
</dbReference>
<dbReference type="PROSITE" id="PS51649">
    <property type="entry name" value="NPH3"/>
    <property type="match status" value="1"/>
</dbReference>
<protein>
    <recommendedName>
        <fullName>BTB/POZ domain-containing protein SETH6</fullName>
    </recommendedName>
</protein>
<evidence type="ECO:0000250" key="1"/>
<evidence type="ECO:0000250" key="2">
    <source>
        <dbReference type="UniProtKB" id="Q9FMF5"/>
    </source>
</evidence>
<evidence type="ECO:0000255" key="3">
    <source>
        <dbReference type="PROSITE-ProRule" id="PRU00982"/>
    </source>
</evidence>
<evidence type="ECO:0000256" key="4">
    <source>
        <dbReference type="SAM" id="MobiDB-lite"/>
    </source>
</evidence>
<evidence type="ECO:0000269" key="5">
    <source>
    </source>
</evidence>
<organism>
    <name type="scientific">Arabidopsis thaliana</name>
    <name type="common">Mouse-ear cress</name>
    <dbReference type="NCBI Taxonomy" id="3702"/>
    <lineage>
        <taxon>Eukaryota</taxon>
        <taxon>Viridiplantae</taxon>
        <taxon>Streptophyta</taxon>
        <taxon>Embryophyta</taxon>
        <taxon>Tracheophyta</taxon>
        <taxon>Spermatophyta</taxon>
        <taxon>Magnoliopsida</taxon>
        <taxon>eudicotyledons</taxon>
        <taxon>Gunneridae</taxon>
        <taxon>Pentapetalae</taxon>
        <taxon>rosids</taxon>
        <taxon>malvids</taxon>
        <taxon>Brassicales</taxon>
        <taxon>Brassicaceae</taxon>
        <taxon>Camelineae</taxon>
        <taxon>Arabidopsis</taxon>
    </lineage>
</organism>